<name>KDPA_BACC4</name>
<organism>
    <name type="scientific">Bacillus cereus (strain B4264)</name>
    <dbReference type="NCBI Taxonomy" id="405532"/>
    <lineage>
        <taxon>Bacteria</taxon>
        <taxon>Bacillati</taxon>
        <taxon>Bacillota</taxon>
        <taxon>Bacilli</taxon>
        <taxon>Bacillales</taxon>
        <taxon>Bacillaceae</taxon>
        <taxon>Bacillus</taxon>
        <taxon>Bacillus cereus group</taxon>
    </lineage>
</organism>
<comment type="function">
    <text evidence="1">Part of the high-affinity ATP-driven potassium transport (or Kdp) system, which catalyzes the hydrolysis of ATP coupled with the electrogenic transport of potassium into the cytoplasm. This subunit binds the extracellular potassium ions and delivers the ions to the membrane domain of KdpB through an intramembrane tunnel.</text>
</comment>
<comment type="subunit">
    <text evidence="1">The system is composed of three essential subunits: KdpA, KdpB and KdpC.</text>
</comment>
<comment type="subcellular location">
    <subcellularLocation>
        <location evidence="1">Cell membrane</location>
        <topology evidence="1">Multi-pass membrane protein</topology>
    </subcellularLocation>
</comment>
<comment type="similarity">
    <text evidence="1">Belongs to the KdpA family.</text>
</comment>
<accession>B7HDF8</accession>
<reference key="1">
    <citation type="submission" date="2008-10" db="EMBL/GenBank/DDBJ databases">
        <title>Genome sequence of Bacillus cereus B4264.</title>
        <authorList>
            <person name="Dodson R.J."/>
            <person name="Durkin A.S."/>
            <person name="Rosovitz M.J."/>
            <person name="Rasko D.A."/>
            <person name="Hoffmaster A."/>
            <person name="Ravel J."/>
            <person name="Sutton G."/>
        </authorList>
    </citation>
    <scope>NUCLEOTIDE SEQUENCE [LARGE SCALE GENOMIC DNA]</scope>
    <source>
        <strain>B4264</strain>
    </source>
</reference>
<sequence>MIWVAVIITMLLFILVAKPTGVYLEKAFQGSKTLDKVFGPFEKLIFKITGVKEYNQTWKQYALSLVLLNGFMIVVVYFIFRLQGVLPLNPAHIEGMEPTLAFNTAISFMADTNLQHYSGENGLSYLSQLIGITFLMFAAPATTLALVMAFIRGLAGKELGNFFVDFTRALTRVFLPIAFIAALVFVALGVPQTLDGAVTAQTIDGAKQSILRGPVASFVSIKELGNNGGGFFGANSTHPFENPGQMSNILQMMLMMLLPTALPFTYGRMVGNKKQGRILFVSLFMVFLLGFITITTSELNGNPALNGMGIEHVQGSAEGKEVRFGTVFSSLYATVTTAAETGAVNTMHDTLTPIGGLVPLVNMMLNTVYGGVGAGFVNIIMYAIIAVFISGLMVGRTPEFLGKKIEGKEMKLIAVTILFHPLLILGFSALALSTNLGTDAISHSGFHGLTQVVYEYTSSAANNGSGFEGLGDNTPFWNITTGLVMFLGRYFSLITMLAVAASLKEKTVVPETVGTFRTDNSLFGGIFIGTIVIVGALTFFPMLVLGPIAEFLTLK</sequence>
<keyword id="KW-1003">Cell membrane</keyword>
<keyword id="KW-0406">Ion transport</keyword>
<keyword id="KW-0472">Membrane</keyword>
<keyword id="KW-0630">Potassium</keyword>
<keyword id="KW-0633">Potassium transport</keyword>
<keyword id="KW-0812">Transmembrane</keyword>
<keyword id="KW-1133">Transmembrane helix</keyword>
<keyword id="KW-0813">Transport</keyword>
<proteinExistence type="inferred from homology"/>
<feature type="chain" id="PRO_1000119332" description="Potassium-transporting ATPase potassium-binding subunit">
    <location>
        <begin position="1"/>
        <end position="555"/>
    </location>
</feature>
<feature type="transmembrane region" description="Helical" evidence="1">
    <location>
        <begin position="2"/>
        <end position="22"/>
    </location>
</feature>
<feature type="transmembrane region" description="Helical" evidence="1">
    <location>
        <begin position="60"/>
        <end position="80"/>
    </location>
</feature>
<feature type="transmembrane region" description="Helical" evidence="1">
    <location>
        <begin position="130"/>
        <end position="150"/>
    </location>
</feature>
<feature type="transmembrane region" description="Helical" evidence="1">
    <location>
        <begin position="173"/>
        <end position="193"/>
    </location>
</feature>
<feature type="transmembrane region" description="Helical" evidence="1">
    <location>
        <begin position="246"/>
        <end position="266"/>
    </location>
</feature>
<feature type="transmembrane region" description="Helical" evidence="1">
    <location>
        <begin position="278"/>
        <end position="298"/>
    </location>
</feature>
<feature type="transmembrane region" description="Helical" evidence="1">
    <location>
        <begin position="374"/>
        <end position="394"/>
    </location>
</feature>
<feature type="transmembrane region" description="Helical" evidence="1">
    <location>
        <begin position="412"/>
        <end position="432"/>
    </location>
</feature>
<feature type="transmembrane region" description="Helical" evidence="1">
    <location>
        <begin position="483"/>
        <end position="503"/>
    </location>
</feature>
<feature type="transmembrane region" description="Helical" evidence="1">
    <location>
        <begin position="525"/>
        <end position="545"/>
    </location>
</feature>
<gene>
    <name evidence="1" type="primary">kdpA</name>
    <name type="ordered locus">BCB4264_A0797</name>
</gene>
<protein>
    <recommendedName>
        <fullName evidence="1">Potassium-transporting ATPase potassium-binding subunit</fullName>
    </recommendedName>
    <alternativeName>
        <fullName evidence="1">ATP phosphohydrolase [potassium-transporting] A chain</fullName>
    </alternativeName>
    <alternativeName>
        <fullName evidence="1">Potassium-binding and translocating subunit A</fullName>
    </alternativeName>
    <alternativeName>
        <fullName evidence="1">Potassium-translocating ATPase A chain</fullName>
    </alternativeName>
</protein>
<evidence type="ECO:0000255" key="1">
    <source>
        <dbReference type="HAMAP-Rule" id="MF_00275"/>
    </source>
</evidence>
<dbReference type="EMBL" id="CP001176">
    <property type="protein sequence ID" value="ACK63947.1"/>
    <property type="molecule type" value="Genomic_DNA"/>
</dbReference>
<dbReference type="RefSeq" id="WP_000638333.1">
    <property type="nucleotide sequence ID" value="NC_011725.1"/>
</dbReference>
<dbReference type="SMR" id="B7HDF8"/>
<dbReference type="KEGG" id="bcb:BCB4264_A0797"/>
<dbReference type="HOGENOM" id="CLU_018614_3_0_9"/>
<dbReference type="Proteomes" id="UP000007096">
    <property type="component" value="Chromosome"/>
</dbReference>
<dbReference type="GO" id="GO:0005886">
    <property type="term" value="C:plasma membrane"/>
    <property type="evidence" value="ECO:0007669"/>
    <property type="project" value="UniProtKB-SubCell"/>
</dbReference>
<dbReference type="GO" id="GO:0008556">
    <property type="term" value="F:P-type potassium transmembrane transporter activity"/>
    <property type="evidence" value="ECO:0007669"/>
    <property type="project" value="InterPro"/>
</dbReference>
<dbReference type="GO" id="GO:0030955">
    <property type="term" value="F:potassium ion binding"/>
    <property type="evidence" value="ECO:0007669"/>
    <property type="project" value="UniProtKB-UniRule"/>
</dbReference>
<dbReference type="HAMAP" id="MF_00275">
    <property type="entry name" value="KdpA"/>
    <property type="match status" value="1"/>
</dbReference>
<dbReference type="InterPro" id="IPR004623">
    <property type="entry name" value="KdpA"/>
</dbReference>
<dbReference type="NCBIfam" id="TIGR00680">
    <property type="entry name" value="kdpA"/>
    <property type="match status" value="1"/>
</dbReference>
<dbReference type="PANTHER" id="PTHR30607">
    <property type="entry name" value="POTASSIUM-TRANSPORTING ATPASE A CHAIN"/>
    <property type="match status" value="1"/>
</dbReference>
<dbReference type="PANTHER" id="PTHR30607:SF2">
    <property type="entry name" value="POTASSIUM-TRANSPORTING ATPASE POTASSIUM-BINDING SUBUNIT"/>
    <property type="match status" value="1"/>
</dbReference>
<dbReference type="Pfam" id="PF03814">
    <property type="entry name" value="KdpA"/>
    <property type="match status" value="1"/>
</dbReference>
<dbReference type="PIRSF" id="PIRSF001294">
    <property type="entry name" value="K_ATPaseA"/>
    <property type="match status" value="1"/>
</dbReference>